<keyword id="KW-0249">Electron transport</keyword>
<keyword id="KW-0349">Heme</keyword>
<keyword id="KW-0408">Iron</keyword>
<keyword id="KW-0472">Membrane</keyword>
<keyword id="KW-0479">Metal-binding</keyword>
<keyword id="KW-0602">Photosynthesis</keyword>
<keyword id="KW-1185">Reference proteome</keyword>
<keyword id="KW-0793">Thylakoid</keyword>
<keyword id="KW-0812">Transmembrane</keyword>
<keyword id="KW-1133">Transmembrane helix</keyword>
<keyword id="KW-0813">Transport</keyword>
<gene>
    <name evidence="1" type="primary">petB</name>
    <name type="ordered locus">cce_1383</name>
</gene>
<comment type="function">
    <text evidence="1">Component of the cytochrome b6-f complex, which mediates electron transfer between photosystem II (PSII) and photosystem I (PSI), cyclic electron flow around PSI, and state transitions.</text>
</comment>
<comment type="cofactor">
    <cofactor evidence="1">
        <name>heme b</name>
        <dbReference type="ChEBI" id="CHEBI:60344"/>
    </cofactor>
    <text evidence="1">Binds 2 heme b groups non-covalently with two histidine residues as axial ligands.</text>
</comment>
<comment type="cofactor">
    <cofactor evidence="1">
        <name>heme c</name>
        <dbReference type="ChEBI" id="CHEBI:61717"/>
    </cofactor>
    <text evidence="1">Binds one heme group covalently by a single cysteine link with no axial amino acid ligand. This heme was named heme ci.</text>
</comment>
<comment type="subunit">
    <text evidence="1">The 4 large subunits of the cytochrome b6-f complex are cytochrome b6, subunit IV (17 kDa polypeptide, PetD), cytochrome f and the Rieske protein, while the 4 small subunits are PetG, PetL, PetM and PetN. The complex functions as a dimer.</text>
</comment>
<comment type="subcellular location">
    <subcellularLocation>
        <location evidence="1">Cellular thylakoid membrane</location>
        <topology evidence="1">Multi-pass membrane protein</topology>
    </subcellularLocation>
</comment>
<comment type="miscellaneous">
    <text evidence="1">Heme 1 (or BH or b566) is high-potential and absorbs at about 566 nm, and heme 2 (or BL or b562) is low-potential and absorbs at about 562 nm.</text>
</comment>
<comment type="similarity">
    <text evidence="1">Belongs to the cytochrome b family. PetB subfamily.</text>
</comment>
<reference key="1">
    <citation type="journal article" date="2008" name="Proc. Natl. Acad. Sci. U.S.A.">
        <title>The genome of Cyanothece 51142, a unicellular diazotrophic cyanobacterium important in the marine nitrogen cycle.</title>
        <authorList>
            <person name="Welsh E.A."/>
            <person name="Liberton M."/>
            <person name="Stoeckel J."/>
            <person name="Loh T."/>
            <person name="Elvitigala T."/>
            <person name="Wang C."/>
            <person name="Wollam A."/>
            <person name="Fulton R.S."/>
            <person name="Clifton S.W."/>
            <person name="Jacobs J.M."/>
            <person name="Aurora R."/>
            <person name="Ghosh B.K."/>
            <person name="Sherman L.A."/>
            <person name="Smith R.D."/>
            <person name="Wilson R.K."/>
            <person name="Pakrasi H.B."/>
        </authorList>
    </citation>
    <scope>NUCLEOTIDE SEQUENCE [LARGE SCALE GENOMIC DNA]</scope>
    <source>
        <strain>ATCC 51142 / BH68</strain>
    </source>
</reference>
<accession>B1WWK9</accession>
<organism>
    <name type="scientific">Crocosphaera subtropica (strain ATCC 51142 / BH68)</name>
    <name type="common">Cyanothece sp. (strain ATCC 51142)</name>
    <dbReference type="NCBI Taxonomy" id="43989"/>
    <lineage>
        <taxon>Bacteria</taxon>
        <taxon>Bacillati</taxon>
        <taxon>Cyanobacteriota</taxon>
        <taxon>Cyanophyceae</taxon>
        <taxon>Oscillatoriophycideae</taxon>
        <taxon>Chroococcales</taxon>
        <taxon>Aphanothecaceae</taxon>
        <taxon>Crocosphaera</taxon>
        <taxon>Crocosphaera subtropica</taxon>
    </lineage>
</organism>
<protein>
    <recommendedName>
        <fullName evidence="1">Cytochrome b6</fullName>
    </recommendedName>
</protein>
<sequence length="222" mass="25197">MFSKQVTDSKVYQWFNDRLEIQAISDDITSKYVPPHVNIFYCLGGITLVCFLVQFATGFAMTFYYKPTVTEAFSSVQYIMNEVNFGWLIRSIHRWSASMMVLMMILHVFRVYLTGGFKKPRELTWMTGVILAVITVSFGVTGYSLPWDQVGYWAVKIVSGVPAAIPVVGDQMVELLRGGQSVGQATLTRFYSLHTFVFPWLIAVFMLAHFLMIRKQGISGPL</sequence>
<evidence type="ECO:0000255" key="1">
    <source>
        <dbReference type="HAMAP-Rule" id="MF_00633"/>
    </source>
</evidence>
<name>CYB6_CROS5</name>
<proteinExistence type="inferred from homology"/>
<dbReference type="EMBL" id="CP000806">
    <property type="protein sequence ID" value="ACB50733.1"/>
    <property type="molecule type" value="Genomic_DNA"/>
</dbReference>
<dbReference type="RefSeq" id="WP_009544199.1">
    <property type="nucleotide sequence ID" value="NC_010546.1"/>
</dbReference>
<dbReference type="SMR" id="B1WWK9"/>
<dbReference type="STRING" id="43989.cce_1383"/>
<dbReference type="KEGG" id="cyt:cce_1383"/>
<dbReference type="eggNOG" id="COG1290">
    <property type="taxonomic scope" value="Bacteria"/>
</dbReference>
<dbReference type="HOGENOM" id="CLU_031114_0_2_3"/>
<dbReference type="OrthoDB" id="9804503at2"/>
<dbReference type="Proteomes" id="UP000001203">
    <property type="component" value="Chromosome circular"/>
</dbReference>
<dbReference type="GO" id="GO:0031676">
    <property type="term" value="C:plasma membrane-derived thylakoid membrane"/>
    <property type="evidence" value="ECO:0007669"/>
    <property type="project" value="UniProtKB-SubCell"/>
</dbReference>
<dbReference type="GO" id="GO:0045158">
    <property type="term" value="F:electron transporter, transferring electrons within cytochrome b6/f complex of photosystem II activity"/>
    <property type="evidence" value="ECO:0007669"/>
    <property type="project" value="UniProtKB-UniRule"/>
</dbReference>
<dbReference type="GO" id="GO:0046872">
    <property type="term" value="F:metal ion binding"/>
    <property type="evidence" value="ECO:0007669"/>
    <property type="project" value="UniProtKB-KW"/>
</dbReference>
<dbReference type="GO" id="GO:0016491">
    <property type="term" value="F:oxidoreductase activity"/>
    <property type="evidence" value="ECO:0007669"/>
    <property type="project" value="InterPro"/>
</dbReference>
<dbReference type="GO" id="GO:0015979">
    <property type="term" value="P:photosynthesis"/>
    <property type="evidence" value="ECO:0007669"/>
    <property type="project" value="UniProtKB-UniRule"/>
</dbReference>
<dbReference type="GO" id="GO:0022904">
    <property type="term" value="P:respiratory electron transport chain"/>
    <property type="evidence" value="ECO:0007669"/>
    <property type="project" value="InterPro"/>
</dbReference>
<dbReference type="CDD" id="cd00284">
    <property type="entry name" value="Cytochrome_b_N"/>
    <property type="match status" value="1"/>
</dbReference>
<dbReference type="FunFam" id="1.20.810.10:FF:000001">
    <property type="entry name" value="Cytochrome b6"/>
    <property type="match status" value="1"/>
</dbReference>
<dbReference type="Gene3D" id="1.20.810.10">
    <property type="entry name" value="Cytochrome Bc1 Complex, Chain C"/>
    <property type="match status" value="1"/>
</dbReference>
<dbReference type="HAMAP" id="MF_00633">
    <property type="entry name" value="Cytb6_f_cytb6"/>
    <property type="match status" value="1"/>
</dbReference>
<dbReference type="InterPro" id="IPR005797">
    <property type="entry name" value="Cyt_b/b6_N"/>
</dbReference>
<dbReference type="InterPro" id="IPR023530">
    <property type="entry name" value="Cyt_B6_PetB"/>
</dbReference>
<dbReference type="InterPro" id="IPR027387">
    <property type="entry name" value="Cytb/b6-like_sf"/>
</dbReference>
<dbReference type="InterPro" id="IPR048259">
    <property type="entry name" value="Cytochrome_b_N_euk/bac"/>
</dbReference>
<dbReference type="InterPro" id="IPR016174">
    <property type="entry name" value="Di-haem_cyt_TM"/>
</dbReference>
<dbReference type="NCBIfam" id="NF002990">
    <property type="entry name" value="PRK03735.1"/>
    <property type="match status" value="1"/>
</dbReference>
<dbReference type="PANTHER" id="PTHR19271">
    <property type="entry name" value="CYTOCHROME B"/>
    <property type="match status" value="1"/>
</dbReference>
<dbReference type="PANTHER" id="PTHR19271:SF16">
    <property type="entry name" value="CYTOCHROME B"/>
    <property type="match status" value="1"/>
</dbReference>
<dbReference type="Pfam" id="PF00033">
    <property type="entry name" value="Cytochrome_B"/>
    <property type="match status" value="1"/>
</dbReference>
<dbReference type="PIRSF" id="PIRSF000032">
    <property type="entry name" value="Cytochrome_b6"/>
    <property type="match status" value="1"/>
</dbReference>
<dbReference type="SUPFAM" id="SSF81342">
    <property type="entry name" value="Transmembrane di-heme cytochromes"/>
    <property type="match status" value="1"/>
</dbReference>
<dbReference type="PROSITE" id="PS51002">
    <property type="entry name" value="CYTB_NTER"/>
    <property type="match status" value="1"/>
</dbReference>
<feature type="chain" id="PRO_1000147335" description="Cytochrome b6">
    <location>
        <begin position="1"/>
        <end position="222"/>
    </location>
</feature>
<feature type="transmembrane region" description="Helical" evidence="1">
    <location>
        <begin position="39"/>
        <end position="59"/>
    </location>
</feature>
<feature type="transmembrane region" description="Helical" evidence="1">
    <location>
        <begin position="97"/>
        <end position="117"/>
    </location>
</feature>
<feature type="transmembrane region" description="Helical" evidence="1">
    <location>
        <begin position="123"/>
        <end position="143"/>
    </location>
</feature>
<feature type="transmembrane region" description="Helical" evidence="1">
    <location>
        <begin position="193"/>
        <end position="213"/>
    </location>
</feature>
<feature type="binding site" description="covalent" evidence="1">
    <location>
        <position position="42"/>
    </location>
    <ligand>
        <name>heme c</name>
        <dbReference type="ChEBI" id="CHEBI:61717"/>
    </ligand>
</feature>
<feature type="binding site" description="axial binding residue" evidence="1">
    <location>
        <position position="93"/>
    </location>
    <ligand>
        <name>heme b</name>
        <dbReference type="ChEBI" id="CHEBI:60344"/>
        <label>2</label>
    </ligand>
    <ligandPart>
        <name>Fe</name>
        <dbReference type="ChEBI" id="CHEBI:18248"/>
    </ligandPart>
</feature>
<feature type="binding site" description="axial binding residue" evidence="1">
    <location>
        <position position="107"/>
    </location>
    <ligand>
        <name>heme b</name>
        <dbReference type="ChEBI" id="CHEBI:60344"/>
        <label>1</label>
    </ligand>
    <ligandPart>
        <name>Fe</name>
        <dbReference type="ChEBI" id="CHEBI:18248"/>
    </ligandPart>
</feature>
<feature type="binding site" description="axial binding residue" evidence="1">
    <location>
        <position position="194"/>
    </location>
    <ligand>
        <name>heme b</name>
        <dbReference type="ChEBI" id="CHEBI:60344"/>
        <label>2</label>
    </ligand>
    <ligandPart>
        <name>Fe</name>
        <dbReference type="ChEBI" id="CHEBI:18248"/>
    </ligandPart>
</feature>
<feature type="binding site" description="axial binding residue" evidence="1">
    <location>
        <position position="209"/>
    </location>
    <ligand>
        <name>heme b</name>
        <dbReference type="ChEBI" id="CHEBI:60344"/>
        <label>1</label>
    </ligand>
    <ligandPart>
        <name>Fe</name>
        <dbReference type="ChEBI" id="CHEBI:18248"/>
    </ligandPart>
</feature>